<reference key="1">
    <citation type="submission" date="2009-01" db="EMBL/GenBank/DDBJ databases">
        <title>Complete sequence of chromosome of Caldicellulosiruptor becscii DSM 6725.</title>
        <authorList>
            <person name="Lucas S."/>
            <person name="Copeland A."/>
            <person name="Lapidus A."/>
            <person name="Glavina del Rio T."/>
            <person name="Tice H."/>
            <person name="Bruce D."/>
            <person name="Goodwin L."/>
            <person name="Pitluck S."/>
            <person name="Sims D."/>
            <person name="Meincke L."/>
            <person name="Brettin T."/>
            <person name="Detter J.C."/>
            <person name="Han C."/>
            <person name="Larimer F."/>
            <person name="Land M."/>
            <person name="Hauser L."/>
            <person name="Kyrpides N."/>
            <person name="Ovchinnikova G."/>
            <person name="Kataeva I."/>
            <person name="Adams M.W.W."/>
        </authorList>
    </citation>
    <scope>NUCLEOTIDE SEQUENCE [LARGE SCALE GENOMIC DNA]</scope>
    <source>
        <strain>ATCC BAA-1888 / DSM 6725 / KCTC 15123 / Z-1320</strain>
    </source>
</reference>
<dbReference type="EC" id="2.5.1.19" evidence="1"/>
<dbReference type="EMBL" id="CP001393">
    <property type="protein sequence ID" value="ACM59958.1"/>
    <property type="molecule type" value="Genomic_DNA"/>
</dbReference>
<dbReference type="RefSeq" id="WP_015907386.1">
    <property type="nucleotide sequence ID" value="NC_012034.1"/>
</dbReference>
<dbReference type="SMR" id="B9MQK4"/>
<dbReference type="STRING" id="521460.Athe_0843"/>
<dbReference type="GeneID" id="31772198"/>
<dbReference type="KEGG" id="ate:Athe_0843"/>
<dbReference type="eggNOG" id="COG0128">
    <property type="taxonomic scope" value="Bacteria"/>
</dbReference>
<dbReference type="HOGENOM" id="CLU_024321_0_1_9"/>
<dbReference type="UniPathway" id="UPA00053">
    <property type="reaction ID" value="UER00089"/>
</dbReference>
<dbReference type="Proteomes" id="UP000007723">
    <property type="component" value="Chromosome"/>
</dbReference>
<dbReference type="GO" id="GO:0005737">
    <property type="term" value="C:cytoplasm"/>
    <property type="evidence" value="ECO:0007669"/>
    <property type="project" value="UniProtKB-SubCell"/>
</dbReference>
<dbReference type="GO" id="GO:0003866">
    <property type="term" value="F:3-phosphoshikimate 1-carboxyvinyltransferase activity"/>
    <property type="evidence" value="ECO:0007669"/>
    <property type="project" value="UniProtKB-UniRule"/>
</dbReference>
<dbReference type="GO" id="GO:0008652">
    <property type="term" value="P:amino acid biosynthetic process"/>
    <property type="evidence" value="ECO:0007669"/>
    <property type="project" value="UniProtKB-KW"/>
</dbReference>
<dbReference type="GO" id="GO:0009073">
    <property type="term" value="P:aromatic amino acid family biosynthetic process"/>
    <property type="evidence" value="ECO:0007669"/>
    <property type="project" value="UniProtKB-KW"/>
</dbReference>
<dbReference type="GO" id="GO:0009423">
    <property type="term" value="P:chorismate biosynthetic process"/>
    <property type="evidence" value="ECO:0007669"/>
    <property type="project" value="UniProtKB-UniRule"/>
</dbReference>
<dbReference type="CDD" id="cd01556">
    <property type="entry name" value="EPSP_synthase"/>
    <property type="match status" value="1"/>
</dbReference>
<dbReference type="FunFam" id="3.65.10.10:FF:000005">
    <property type="entry name" value="3-phosphoshikimate 1-carboxyvinyltransferase"/>
    <property type="match status" value="1"/>
</dbReference>
<dbReference type="FunFam" id="3.65.10.10:FF:000006">
    <property type="entry name" value="3-phosphoshikimate 1-carboxyvinyltransferase"/>
    <property type="match status" value="1"/>
</dbReference>
<dbReference type="Gene3D" id="3.65.10.10">
    <property type="entry name" value="Enolpyruvate transferase domain"/>
    <property type="match status" value="2"/>
</dbReference>
<dbReference type="HAMAP" id="MF_00210">
    <property type="entry name" value="EPSP_synth"/>
    <property type="match status" value="1"/>
</dbReference>
<dbReference type="InterPro" id="IPR001986">
    <property type="entry name" value="Enolpyruvate_Tfrase_dom"/>
</dbReference>
<dbReference type="InterPro" id="IPR036968">
    <property type="entry name" value="Enolpyruvate_Tfrase_sf"/>
</dbReference>
<dbReference type="InterPro" id="IPR006264">
    <property type="entry name" value="EPSP_synthase"/>
</dbReference>
<dbReference type="InterPro" id="IPR023193">
    <property type="entry name" value="EPSP_synthase_CS"/>
</dbReference>
<dbReference type="InterPro" id="IPR013792">
    <property type="entry name" value="RNA3'P_cycl/enolpyr_Trfase_a/b"/>
</dbReference>
<dbReference type="NCBIfam" id="TIGR01356">
    <property type="entry name" value="aroA"/>
    <property type="match status" value="1"/>
</dbReference>
<dbReference type="PANTHER" id="PTHR21090">
    <property type="entry name" value="AROM/DEHYDROQUINATE SYNTHASE"/>
    <property type="match status" value="1"/>
</dbReference>
<dbReference type="PANTHER" id="PTHR21090:SF5">
    <property type="entry name" value="PENTAFUNCTIONAL AROM POLYPEPTIDE"/>
    <property type="match status" value="1"/>
</dbReference>
<dbReference type="Pfam" id="PF00275">
    <property type="entry name" value="EPSP_synthase"/>
    <property type="match status" value="1"/>
</dbReference>
<dbReference type="PIRSF" id="PIRSF000505">
    <property type="entry name" value="EPSPS"/>
    <property type="match status" value="1"/>
</dbReference>
<dbReference type="SUPFAM" id="SSF55205">
    <property type="entry name" value="EPT/RTPC-like"/>
    <property type="match status" value="1"/>
</dbReference>
<dbReference type="PROSITE" id="PS00104">
    <property type="entry name" value="EPSP_SYNTHASE_1"/>
    <property type="match status" value="1"/>
</dbReference>
<dbReference type="PROSITE" id="PS00885">
    <property type="entry name" value="EPSP_SYNTHASE_2"/>
    <property type="match status" value="1"/>
</dbReference>
<proteinExistence type="inferred from homology"/>
<evidence type="ECO:0000255" key="1">
    <source>
        <dbReference type="HAMAP-Rule" id="MF_00210"/>
    </source>
</evidence>
<gene>
    <name evidence="1" type="primary">aroA</name>
    <name type="ordered locus">Athe_0843</name>
</gene>
<protein>
    <recommendedName>
        <fullName evidence="1">3-phosphoshikimate 1-carboxyvinyltransferase</fullName>
        <ecNumber evidence="1">2.5.1.19</ecNumber>
    </recommendedName>
    <alternativeName>
        <fullName evidence="1">5-enolpyruvylshikimate-3-phosphate synthase</fullName>
        <shortName evidence="1">EPSP synthase</shortName>
        <shortName evidence="1">EPSPS</shortName>
    </alternativeName>
</protein>
<comment type="function">
    <text evidence="1">Catalyzes the transfer of the enolpyruvyl moiety of phosphoenolpyruvate (PEP) to the 5-hydroxyl of shikimate-3-phosphate (S3P) to produce enolpyruvyl shikimate-3-phosphate and inorganic phosphate.</text>
</comment>
<comment type="catalytic activity">
    <reaction evidence="1">
        <text>3-phosphoshikimate + phosphoenolpyruvate = 5-O-(1-carboxyvinyl)-3-phosphoshikimate + phosphate</text>
        <dbReference type="Rhea" id="RHEA:21256"/>
        <dbReference type="ChEBI" id="CHEBI:43474"/>
        <dbReference type="ChEBI" id="CHEBI:57701"/>
        <dbReference type="ChEBI" id="CHEBI:58702"/>
        <dbReference type="ChEBI" id="CHEBI:145989"/>
        <dbReference type="EC" id="2.5.1.19"/>
    </reaction>
    <physiologicalReaction direction="left-to-right" evidence="1">
        <dbReference type="Rhea" id="RHEA:21257"/>
    </physiologicalReaction>
</comment>
<comment type="pathway">
    <text evidence="1">Metabolic intermediate biosynthesis; chorismate biosynthesis; chorismate from D-erythrose 4-phosphate and phosphoenolpyruvate: step 6/7.</text>
</comment>
<comment type="subunit">
    <text evidence="1">Monomer.</text>
</comment>
<comment type="subcellular location">
    <subcellularLocation>
        <location evidence="1">Cytoplasm</location>
    </subcellularLocation>
</comment>
<comment type="similarity">
    <text evidence="1">Belongs to the EPSP synthase family.</text>
</comment>
<organism>
    <name type="scientific">Caldicellulosiruptor bescii (strain ATCC BAA-1888 / DSM 6725 / KCTC 15123 / Z-1320)</name>
    <name type="common">Anaerocellum thermophilum</name>
    <dbReference type="NCBI Taxonomy" id="521460"/>
    <lineage>
        <taxon>Bacteria</taxon>
        <taxon>Bacillati</taxon>
        <taxon>Bacillota</taxon>
        <taxon>Bacillota incertae sedis</taxon>
        <taxon>Caldicellulosiruptorales</taxon>
        <taxon>Caldicellulosiruptoraceae</taxon>
        <taxon>Caldicellulosiruptor</taxon>
    </lineage>
</organism>
<accession>B9MQK4</accession>
<keyword id="KW-0028">Amino-acid biosynthesis</keyword>
<keyword id="KW-0057">Aromatic amino acid biosynthesis</keyword>
<keyword id="KW-0963">Cytoplasm</keyword>
<keyword id="KW-0808">Transferase</keyword>
<sequence>MNVKIDGRRKINSNVIVPPDKSISHRSIMIGSLANGVTEIENFLFSDDCLATINCFKNLSTDIEIRNDKIIVKGNGFALSAPKQILDCQNSGTTTRLLLGILSTQEFESILTGDSSLKKRPMKRVTVPLSQMGAEFEFLEKEDFLPIKVKGSKKLKPIEYTLPIPSAQVKSALIFASLKAEGKSVIKESPKSRDHTELMLKHAGANIKSWEKDGVYTVEILPSQISSIKIKIPSDISSAAFFIVLALICEGSSVVIENCILNPTRTGIIDVLKQMGAEIKIEDVENRNGELVGKIVARSSNLRGVKVEKNDIPRIIDEIPILAVAAAFAEGKTIIDHASELRVKESDRIKTTVEMLKSFGAECYELENGLEIIGSREKLKSAVVNSYKDHRIAMAASIMACAVEGESTILDADCVSISFPNFYDILFSSTKKI</sequence>
<feature type="chain" id="PRO_1000124666" description="3-phosphoshikimate 1-carboxyvinyltransferase">
    <location>
        <begin position="1"/>
        <end position="433"/>
    </location>
</feature>
<feature type="active site" description="Proton acceptor" evidence="1">
    <location>
        <position position="317"/>
    </location>
</feature>
<feature type="binding site" evidence="1">
    <location>
        <position position="21"/>
    </location>
    <ligand>
        <name>3-phosphoshikimate</name>
        <dbReference type="ChEBI" id="CHEBI:145989"/>
    </ligand>
</feature>
<feature type="binding site" evidence="1">
    <location>
        <position position="21"/>
    </location>
    <ligand>
        <name>phosphoenolpyruvate</name>
        <dbReference type="ChEBI" id="CHEBI:58702"/>
    </ligand>
</feature>
<feature type="binding site" evidence="1">
    <location>
        <position position="22"/>
    </location>
    <ligand>
        <name>3-phosphoshikimate</name>
        <dbReference type="ChEBI" id="CHEBI:145989"/>
    </ligand>
</feature>
<feature type="binding site" evidence="1">
    <location>
        <position position="26"/>
    </location>
    <ligand>
        <name>3-phosphoshikimate</name>
        <dbReference type="ChEBI" id="CHEBI:145989"/>
    </ligand>
</feature>
<feature type="binding site" evidence="1">
    <location>
        <position position="92"/>
    </location>
    <ligand>
        <name>phosphoenolpyruvate</name>
        <dbReference type="ChEBI" id="CHEBI:58702"/>
    </ligand>
</feature>
<feature type="binding site" evidence="1">
    <location>
        <position position="120"/>
    </location>
    <ligand>
        <name>phosphoenolpyruvate</name>
        <dbReference type="ChEBI" id="CHEBI:58702"/>
    </ligand>
</feature>
<feature type="binding site" evidence="1">
    <location>
        <position position="166"/>
    </location>
    <ligand>
        <name>3-phosphoshikimate</name>
        <dbReference type="ChEBI" id="CHEBI:145989"/>
    </ligand>
</feature>
<feature type="binding site" evidence="1">
    <location>
        <position position="168"/>
    </location>
    <ligand>
        <name>3-phosphoshikimate</name>
        <dbReference type="ChEBI" id="CHEBI:145989"/>
    </ligand>
</feature>
<feature type="binding site" evidence="1">
    <location>
        <position position="168"/>
    </location>
    <ligand>
        <name>phosphoenolpyruvate</name>
        <dbReference type="ChEBI" id="CHEBI:58702"/>
    </ligand>
</feature>
<feature type="binding site" evidence="1">
    <location>
        <position position="317"/>
    </location>
    <ligand>
        <name>3-phosphoshikimate</name>
        <dbReference type="ChEBI" id="CHEBI:145989"/>
    </ligand>
</feature>
<feature type="binding site" evidence="1">
    <location>
        <position position="344"/>
    </location>
    <ligand>
        <name>3-phosphoshikimate</name>
        <dbReference type="ChEBI" id="CHEBI:145989"/>
    </ligand>
</feature>
<feature type="binding site" evidence="1">
    <location>
        <position position="348"/>
    </location>
    <ligand>
        <name>phosphoenolpyruvate</name>
        <dbReference type="ChEBI" id="CHEBI:58702"/>
    </ligand>
</feature>
<feature type="binding site" evidence="1">
    <location>
        <position position="391"/>
    </location>
    <ligand>
        <name>phosphoenolpyruvate</name>
        <dbReference type="ChEBI" id="CHEBI:58702"/>
    </ligand>
</feature>
<name>AROA_CALBD</name>